<name>LOLB_MANSM</name>
<reference key="1">
    <citation type="journal article" date="2004" name="Nat. Biotechnol.">
        <title>The genome sequence of the capnophilic rumen bacterium Mannheimia succiniciproducens.</title>
        <authorList>
            <person name="Hong S.H."/>
            <person name="Kim J.S."/>
            <person name="Lee S.Y."/>
            <person name="In Y.H."/>
            <person name="Choi S.S."/>
            <person name="Rih J.-K."/>
            <person name="Kim C.H."/>
            <person name="Jeong H."/>
            <person name="Hur C.G."/>
            <person name="Kim J.J."/>
        </authorList>
    </citation>
    <scope>NUCLEOTIDE SEQUENCE [LARGE SCALE GENOMIC DNA]</scope>
    <source>
        <strain>KCTC 0769BP / MBEL55E</strain>
    </source>
</reference>
<protein>
    <recommendedName>
        <fullName evidence="1">Outer-membrane lipoprotein LolB</fullName>
    </recommendedName>
</protein>
<comment type="function">
    <text evidence="1">Plays a critical role in the incorporation of lipoproteins in the outer membrane after they are released by the LolA protein.</text>
</comment>
<comment type="subunit">
    <text evidence="1">Monomer.</text>
</comment>
<comment type="subcellular location">
    <subcellularLocation>
        <location evidence="1">Cell outer membrane</location>
        <topology evidence="1">Lipid-anchor</topology>
    </subcellularLocation>
</comment>
<comment type="similarity">
    <text evidence="1">Belongs to the LolB family.</text>
</comment>
<gene>
    <name evidence="1" type="primary">lolB</name>
    <name type="ordered locus">MS1534</name>
</gene>
<proteinExistence type="inferred from homology"/>
<accession>Q65SB9</accession>
<dbReference type="EMBL" id="AE016827">
    <property type="protein sequence ID" value="AAU38141.1"/>
    <property type="molecule type" value="Genomic_DNA"/>
</dbReference>
<dbReference type="RefSeq" id="WP_011200707.1">
    <property type="nucleotide sequence ID" value="NC_006300.1"/>
</dbReference>
<dbReference type="SMR" id="Q65SB9"/>
<dbReference type="STRING" id="221988.MS1534"/>
<dbReference type="KEGG" id="msu:MS1534"/>
<dbReference type="eggNOG" id="COG3017">
    <property type="taxonomic scope" value="Bacteria"/>
</dbReference>
<dbReference type="HOGENOM" id="CLU_092816_1_1_6"/>
<dbReference type="OrthoDB" id="9797618at2"/>
<dbReference type="Proteomes" id="UP000000607">
    <property type="component" value="Chromosome"/>
</dbReference>
<dbReference type="GO" id="GO:0009279">
    <property type="term" value="C:cell outer membrane"/>
    <property type="evidence" value="ECO:0007669"/>
    <property type="project" value="UniProtKB-SubCell"/>
</dbReference>
<dbReference type="GO" id="GO:0044874">
    <property type="term" value="P:lipoprotein localization to outer membrane"/>
    <property type="evidence" value="ECO:0007669"/>
    <property type="project" value="UniProtKB-UniRule"/>
</dbReference>
<dbReference type="GO" id="GO:0015031">
    <property type="term" value="P:protein transport"/>
    <property type="evidence" value="ECO:0007669"/>
    <property type="project" value="UniProtKB-KW"/>
</dbReference>
<dbReference type="CDD" id="cd16326">
    <property type="entry name" value="LolB"/>
    <property type="match status" value="1"/>
</dbReference>
<dbReference type="Gene3D" id="2.50.20.10">
    <property type="entry name" value="Lipoprotein localisation LolA/LolB/LppX"/>
    <property type="match status" value="1"/>
</dbReference>
<dbReference type="HAMAP" id="MF_00233">
    <property type="entry name" value="LolB"/>
    <property type="match status" value="1"/>
</dbReference>
<dbReference type="InterPro" id="IPR029046">
    <property type="entry name" value="LolA/LolB/LppX"/>
</dbReference>
<dbReference type="InterPro" id="IPR004565">
    <property type="entry name" value="OM_lipoprot_LolB"/>
</dbReference>
<dbReference type="NCBIfam" id="TIGR00548">
    <property type="entry name" value="lolB"/>
    <property type="match status" value="1"/>
</dbReference>
<dbReference type="Pfam" id="PF03550">
    <property type="entry name" value="LolB"/>
    <property type="match status" value="1"/>
</dbReference>
<dbReference type="SUPFAM" id="SSF89392">
    <property type="entry name" value="Prokaryotic lipoproteins and lipoprotein localization factors"/>
    <property type="match status" value="1"/>
</dbReference>
<dbReference type="PROSITE" id="PS51257">
    <property type="entry name" value="PROKAR_LIPOPROTEIN"/>
    <property type="match status" value="1"/>
</dbReference>
<organism>
    <name type="scientific">Mannheimia succiniciproducens (strain KCTC 0769BP / MBEL55E)</name>
    <dbReference type="NCBI Taxonomy" id="221988"/>
    <lineage>
        <taxon>Bacteria</taxon>
        <taxon>Pseudomonadati</taxon>
        <taxon>Pseudomonadota</taxon>
        <taxon>Gammaproteobacteria</taxon>
        <taxon>Pasteurellales</taxon>
        <taxon>Pasteurellaceae</taxon>
        <taxon>Basfia</taxon>
    </lineage>
</organism>
<keyword id="KW-0998">Cell outer membrane</keyword>
<keyword id="KW-0143">Chaperone</keyword>
<keyword id="KW-0449">Lipoprotein</keyword>
<keyword id="KW-0472">Membrane</keyword>
<keyword id="KW-0564">Palmitate</keyword>
<keyword id="KW-0653">Protein transport</keyword>
<keyword id="KW-0732">Signal</keyword>
<keyword id="KW-0813">Transport</keyword>
<sequence length="210" mass="24086">MNHLKSFFTALVAGFILTACSSLDISDTRPADVKTIDKSDIQWQQHLKQIKQIQHYSSQGQIGYISSKERFSSRFEWNYAAPTDYTLKLYSTISSTSLVMQMHNTGMTISDNKGNRRSEADAKALVREIIGMDVPLEQFAYWLKGQPDEKADYQVGENHYLASFTYPLDGTVWSADYLNYHEEKQPALPKDILLKNANQTLKIRVDNWTF</sequence>
<feature type="signal peptide" evidence="1">
    <location>
        <begin position="1"/>
        <end position="19"/>
    </location>
</feature>
<feature type="chain" id="PRO_0000336610" description="Outer-membrane lipoprotein LolB">
    <location>
        <begin position="20"/>
        <end position="210"/>
    </location>
</feature>
<feature type="lipid moiety-binding region" description="N-palmitoyl cysteine" evidence="1">
    <location>
        <position position="20"/>
    </location>
</feature>
<feature type="lipid moiety-binding region" description="S-diacylglycerol cysteine" evidence="1">
    <location>
        <position position="20"/>
    </location>
</feature>
<evidence type="ECO:0000255" key="1">
    <source>
        <dbReference type="HAMAP-Rule" id="MF_00233"/>
    </source>
</evidence>